<accession>Q12032</accession>
<accession>D6W2S1</accession>
<keyword id="KW-0496">Mitochondrion</keyword>
<keyword id="KW-1185">Reference proteome</keyword>
<keyword id="KW-0809">Transit peptide</keyword>
<evidence type="ECO:0000255" key="1"/>
<evidence type="ECO:0000269" key="2">
    <source>
    </source>
</evidence>
<evidence type="ECO:0000269" key="3">
    <source>
    </source>
</evidence>
<evidence type="ECO:0000269" key="4">
    <source>
    </source>
</evidence>
<evidence type="ECO:0000269" key="5">
    <source>
    </source>
</evidence>
<evidence type="ECO:0000305" key="6"/>
<organism>
    <name type="scientific">Saccharomyces cerevisiae (strain ATCC 204508 / S288c)</name>
    <name type="common">Baker's yeast</name>
    <dbReference type="NCBI Taxonomy" id="559292"/>
    <lineage>
        <taxon>Eukaryota</taxon>
        <taxon>Fungi</taxon>
        <taxon>Dikarya</taxon>
        <taxon>Ascomycota</taxon>
        <taxon>Saccharomycotina</taxon>
        <taxon>Saccharomycetes</taxon>
        <taxon>Saccharomycetales</taxon>
        <taxon>Saccharomycetaceae</taxon>
        <taxon>Saccharomyces</taxon>
    </lineage>
</organism>
<reference key="1">
    <citation type="journal article" date="1996" name="Yeast">
        <title>Sequence and analysis of a 33 kb fragment from the right arm of chromosome XV of the yeast Saccharomyces cerevisiae.</title>
        <authorList>
            <person name="Galisson F."/>
            <person name="Dujon B."/>
        </authorList>
    </citation>
    <scope>NUCLEOTIDE SEQUENCE [GENOMIC DNA]</scope>
    <source>
        <strain>ATCC 96604 / S288c / FY1679</strain>
    </source>
</reference>
<reference key="2">
    <citation type="journal article" date="1997" name="Nature">
        <title>The nucleotide sequence of Saccharomyces cerevisiae chromosome XV.</title>
        <authorList>
            <person name="Dujon B."/>
            <person name="Albermann K."/>
            <person name="Aldea M."/>
            <person name="Alexandraki D."/>
            <person name="Ansorge W."/>
            <person name="Arino J."/>
            <person name="Benes V."/>
            <person name="Bohn C."/>
            <person name="Bolotin-Fukuhara M."/>
            <person name="Bordonne R."/>
            <person name="Boyer J."/>
            <person name="Camasses A."/>
            <person name="Casamayor A."/>
            <person name="Casas C."/>
            <person name="Cheret G."/>
            <person name="Cziepluch C."/>
            <person name="Daignan-Fornier B."/>
            <person name="Dang V.-D."/>
            <person name="de Haan M."/>
            <person name="Delius H."/>
            <person name="Durand P."/>
            <person name="Fairhead C."/>
            <person name="Feldmann H."/>
            <person name="Gaillon L."/>
            <person name="Galisson F."/>
            <person name="Gamo F.-J."/>
            <person name="Gancedo C."/>
            <person name="Goffeau A."/>
            <person name="Goulding S.E."/>
            <person name="Grivell L.A."/>
            <person name="Habbig B."/>
            <person name="Hand N.J."/>
            <person name="Hani J."/>
            <person name="Hattenhorst U."/>
            <person name="Hebling U."/>
            <person name="Hernando Y."/>
            <person name="Herrero E."/>
            <person name="Heumann K."/>
            <person name="Hiesel R."/>
            <person name="Hilger F."/>
            <person name="Hofmann B."/>
            <person name="Hollenberg C.P."/>
            <person name="Hughes B."/>
            <person name="Jauniaux J.-C."/>
            <person name="Kalogeropoulos A."/>
            <person name="Katsoulou C."/>
            <person name="Kordes E."/>
            <person name="Lafuente M.J."/>
            <person name="Landt O."/>
            <person name="Louis E.J."/>
            <person name="Maarse A.C."/>
            <person name="Madania A."/>
            <person name="Mannhaupt G."/>
            <person name="Marck C."/>
            <person name="Martin R.P."/>
            <person name="Mewes H.-W."/>
            <person name="Michaux G."/>
            <person name="Paces V."/>
            <person name="Parle-McDermott A.G."/>
            <person name="Pearson B.M."/>
            <person name="Perrin A."/>
            <person name="Pettersson B."/>
            <person name="Poch O."/>
            <person name="Pohl T.M."/>
            <person name="Poirey R."/>
            <person name="Portetelle D."/>
            <person name="Pujol A."/>
            <person name="Purnelle B."/>
            <person name="Ramezani Rad M."/>
            <person name="Rechmann S."/>
            <person name="Schwager C."/>
            <person name="Schweizer M."/>
            <person name="Sor F."/>
            <person name="Sterky F."/>
            <person name="Tarassov I.A."/>
            <person name="Teodoru C."/>
            <person name="Tettelin H."/>
            <person name="Thierry A."/>
            <person name="Tobiasch E."/>
            <person name="Tzermia M."/>
            <person name="Uhlen M."/>
            <person name="Unseld M."/>
            <person name="Valens M."/>
            <person name="Vandenbol M."/>
            <person name="Vetter I."/>
            <person name="Vlcek C."/>
            <person name="Voet M."/>
            <person name="Volckaert G."/>
            <person name="Voss H."/>
            <person name="Wambutt R."/>
            <person name="Wedler H."/>
            <person name="Wiemann S."/>
            <person name="Winsor B."/>
            <person name="Wolfe K.H."/>
            <person name="Zollner A."/>
            <person name="Zumstein E."/>
            <person name="Kleine K."/>
        </authorList>
    </citation>
    <scope>NUCLEOTIDE SEQUENCE [LARGE SCALE GENOMIC DNA]</scope>
    <source>
        <strain>ATCC 204508 / S288c</strain>
    </source>
</reference>
<reference key="3">
    <citation type="journal article" date="2014" name="G3 (Bethesda)">
        <title>The reference genome sequence of Saccharomyces cerevisiae: Then and now.</title>
        <authorList>
            <person name="Engel S.R."/>
            <person name="Dietrich F.S."/>
            <person name="Fisk D.G."/>
            <person name="Binkley G."/>
            <person name="Balakrishnan R."/>
            <person name="Costanzo M.C."/>
            <person name="Dwight S.S."/>
            <person name="Hitz B.C."/>
            <person name="Karra K."/>
            <person name="Nash R.S."/>
            <person name="Weng S."/>
            <person name="Wong E.D."/>
            <person name="Lloyd P."/>
            <person name="Skrzypek M.S."/>
            <person name="Miyasato S.R."/>
            <person name="Simison M."/>
            <person name="Cherry J.M."/>
        </authorList>
    </citation>
    <scope>GENOME REANNOTATION</scope>
    <source>
        <strain>ATCC 204508 / S288c</strain>
    </source>
</reference>
<reference key="4">
    <citation type="journal article" date="2007" name="Genome Res.">
        <title>Approaching a complete repository of sequence-verified protein-encoding clones for Saccharomyces cerevisiae.</title>
        <authorList>
            <person name="Hu Y."/>
            <person name="Rolfs A."/>
            <person name="Bhullar B."/>
            <person name="Murthy T.V.S."/>
            <person name="Zhu C."/>
            <person name="Berger M.F."/>
            <person name="Camargo A.A."/>
            <person name="Kelley F."/>
            <person name="McCarron S."/>
            <person name="Jepson D."/>
            <person name="Richardson A."/>
            <person name="Raphael J."/>
            <person name="Moreira D."/>
            <person name="Taycher E."/>
            <person name="Zuo D."/>
            <person name="Mohr S."/>
            <person name="Kane M.F."/>
            <person name="Williamson J."/>
            <person name="Simpson A.J.G."/>
            <person name="Bulyk M.L."/>
            <person name="Harlow E."/>
            <person name="Marsischky G."/>
            <person name="Kolodner R.D."/>
            <person name="LaBaer J."/>
        </authorList>
    </citation>
    <scope>NUCLEOTIDE SEQUENCE [GENOMIC DNA]</scope>
    <source>
        <strain>ATCC 204508 / S288c</strain>
    </source>
</reference>
<reference key="5">
    <citation type="journal article" date="2003" name="Nature">
        <title>Global analysis of protein localization in budding yeast.</title>
        <authorList>
            <person name="Huh W.-K."/>
            <person name="Falvo J.V."/>
            <person name="Gerke L.C."/>
            <person name="Carroll A.S."/>
            <person name="Howson R.W."/>
            <person name="Weissman J.S."/>
            <person name="O'Shea E.K."/>
        </authorList>
    </citation>
    <scope>SUBCELLULAR LOCATION [LARGE SCALE ANALYSIS]</scope>
</reference>
<reference key="6">
    <citation type="journal article" date="2003" name="Nature">
        <title>Global analysis of protein expression in yeast.</title>
        <authorList>
            <person name="Ghaemmaghami S."/>
            <person name="Huh W.-K."/>
            <person name="Bower K."/>
            <person name="Howson R.W."/>
            <person name="Belle A."/>
            <person name="Dephoure N."/>
            <person name="O'Shea E.K."/>
            <person name="Weissman J.S."/>
        </authorList>
    </citation>
    <scope>LEVEL OF PROTEIN EXPRESSION [LARGE SCALE ANALYSIS]</scope>
</reference>
<reference key="7">
    <citation type="journal article" date="2003" name="Proc. Natl. Acad. Sci. U.S.A.">
        <title>The proteome of Saccharomyces cerevisiae mitochondria.</title>
        <authorList>
            <person name="Sickmann A."/>
            <person name="Reinders J."/>
            <person name="Wagner Y."/>
            <person name="Joppich C."/>
            <person name="Zahedi R.P."/>
            <person name="Meyer H.E."/>
            <person name="Schoenfisch B."/>
            <person name="Perschil I."/>
            <person name="Chacinska A."/>
            <person name="Guiard B."/>
            <person name="Rehling P."/>
            <person name="Pfanner N."/>
            <person name="Meisinger C."/>
        </authorList>
    </citation>
    <scope>SUBCELLULAR LOCATION [LARGE SCALE ANALYSIS]</scope>
    <source>
        <strain>ATCC 76625 / YPH499</strain>
    </source>
</reference>
<reference key="8">
    <citation type="journal article" date="2009" name="PLoS Genet.">
        <title>Computationally driven, quantitative experiments discover genes required for mitochondrial biogenesis.</title>
        <authorList>
            <person name="Hess D.C."/>
            <person name="Myers C.L."/>
            <person name="Huttenhower C."/>
            <person name="Hibbs M.A."/>
            <person name="Hayes A.P."/>
            <person name="Paw J."/>
            <person name="Clore J.J."/>
            <person name="Mendoza R.M."/>
            <person name="Luis B.S."/>
            <person name="Nislow C."/>
            <person name="Giaever G."/>
            <person name="Costanzo M."/>
            <person name="Troyanskaya O.G."/>
            <person name="Caudy A.A."/>
        </authorList>
    </citation>
    <scope>DISRUPTION PHENOTYPE</scope>
</reference>
<proteinExistence type="evidence at protein level"/>
<name>AIM41_YEAST</name>
<comment type="subcellular location">
    <subcellularLocation>
        <location evidence="2 4">Mitochondrion</location>
    </subcellularLocation>
</comment>
<comment type="disruption phenotype">
    <text evidence="5">Increases frequency of mitochondrial genome loss.</text>
</comment>
<comment type="miscellaneous">
    <text evidence="3">Present with 2870 molecules/cell in log phase SD medium.</text>
</comment>
<comment type="similarity">
    <text evidence="6">Belongs to the AIM41 family.</text>
</comment>
<gene>
    <name type="primary">AIM41</name>
    <name type="ordered locus">YOR215C</name>
    <name type="ORF">YOR50-5</name>
</gene>
<protein>
    <recommendedName>
        <fullName>Altered inheritance of mitochondria protein 41, mitochondrial</fullName>
    </recommendedName>
</protein>
<sequence length="185" mass="21229">MFRQSIRPLVSNRLTFIRYNSSPAYTAAVSLLKGDLKKAMIAKDEMKKTAIRNMLSAIKNKEIALKGKSADEYSLYDMYSKLISQRKDSINEFLANKRDDLVAKEQGEMDIIKKYMDQLPVSSELDIDQNVKKLLDALKTKAGEKKVQIKEIMGEIDWKSLPTEWKTSPTAIKNSIVKQFKEIFK</sequence>
<dbReference type="EMBL" id="X92441">
    <property type="protein sequence ID" value="CAA63178.1"/>
    <property type="molecule type" value="Genomic_DNA"/>
</dbReference>
<dbReference type="EMBL" id="Z75123">
    <property type="protein sequence ID" value="CAA99432.1"/>
    <property type="molecule type" value="Genomic_DNA"/>
</dbReference>
<dbReference type="EMBL" id="AY557752">
    <property type="protein sequence ID" value="AAS56078.1"/>
    <property type="molecule type" value="Genomic_DNA"/>
</dbReference>
<dbReference type="EMBL" id="BK006948">
    <property type="protein sequence ID" value="DAA10987.1"/>
    <property type="molecule type" value="Genomic_DNA"/>
</dbReference>
<dbReference type="PIR" id="S60942">
    <property type="entry name" value="S60942"/>
</dbReference>
<dbReference type="RefSeq" id="NP_014858.1">
    <property type="nucleotide sequence ID" value="NM_001183634.1"/>
</dbReference>
<dbReference type="SMR" id="Q12032"/>
<dbReference type="BioGRID" id="34610">
    <property type="interactions" value="54"/>
</dbReference>
<dbReference type="DIP" id="DIP-1988N"/>
<dbReference type="FunCoup" id="Q12032">
    <property type="interactions" value="145"/>
</dbReference>
<dbReference type="IntAct" id="Q12032">
    <property type="interactions" value="4"/>
</dbReference>
<dbReference type="MINT" id="Q12032"/>
<dbReference type="STRING" id="4932.YOR215C"/>
<dbReference type="iPTMnet" id="Q12032"/>
<dbReference type="PaxDb" id="4932-YOR215C"/>
<dbReference type="PeptideAtlas" id="Q12032"/>
<dbReference type="EnsemblFungi" id="YOR215C_mRNA">
    <property type="protein sequence ID" value="YOR215C"/>
    <property type="gene ID" value="YOR215C"/>
</dbReference>
<dbReference type="GeneID" id="854390"/>
<dbReference type="KEGG" id="sce:YOR215C"/>
<dbReference type="AGR" id="SGD:S000005741"/>
<dbReference type="SGD" id="S000005741">
    <property type="gene designation" value="AIM41"/>
</dbReference>
<dbReference type="VEuPathDB" id="FungiDB:YOR215C"/>
<dbReference type="eggNOG" id="ENOG502RZX9">
    <property type="taxonomic scope" value="Eukaryota"/>
</dbReference>
<dbReference type="HOGENOM" id="CLU_123460_0_0_1"/>
<dbReference type="InParanoid" id="Q12032"/>
<dbReference type="OMA" id="CIRTINS"/>
<dbReference type="OrthoDB" id="538640at2759"/>
<dbReference type="BioCyc" id="YEAST:G3O-33717-MONOMER"/>
<dbReference type="BioGRID-ORCS" id="854390">
    <property type="hits" value="9 hits in 10 CRISPR screens"/>
</dbReference>
<dbReference type="PRO" id="PR:Q12032"/>
<dbReference type="Proteomes" id="UP000002311">
    <property type="component" value="Chromosome XV"/>
</dbReference>
<dbReference type="RNAct" id="Q12032">
    <property type="molecule type" value="protein"/>
</dbReference>
<dbReference type="GO" id="GO:0005739">
    <property type="term" value="C:mitochondrion"/>
    <property type="evidence" value="ECO:0007005"/>
    <property type="project" value="SGD"/>
</dbReference>
<dbReference type="GO" id="GO:0016884">
    <property type="term" value="F:carbon-nitrogen ligase activity, with glutamine as amido-N-donor"/>
    <property type="evidence" value="ECO:0007669"/>
    <property type="project" value="InterPro"/>
</dbReference>
<dbReference type="FunFam" id="1.10.1510.10:FF:000002">
    <property type="entry name" value="Altered inheritance of mitochondria protein 41, mitochondrial"/>
    <property type="match status" value="1"/>
</dbReference>
<dbReference type="Gene3D" id="1.10.1510.10">
    <property type="entry name" value="Uncharacterised protein YqeY/AIM41 PF09424, N-terminal domain"/>
    <property type="match status" value="1"/>
</dbReference>
<dbReference type="InterPro" id="IPR003789">
    <property type="entry name" value="Asn/Gln_tRNA_amidoTrase-B-like"/>
</dbReference>
<dbReference type="InterPro" id="IPR019004">
    <property type="entry name" value="YqeY/Aim41"/>
</dbReference>
<dbReference type="InterPro" id="IPR042184">
    <property type="entry name" value="YqeY/Aim41_N"/>
</dbReference>
<dbReference type="PANTHER" id="PTHR28055">
    <property type="entry name" value="ALTERED INHERITANCE OF MITOCHONDRIA PROTEIN 41, MITOCHONDRIAL"/>
    <property type="match status" value="1"/>
</dbReference>
<dbReference type="PANTHER" id="PTHR28055:SF1">
    <property type="entry name" value="ALTERED INHERITANCE OF MITOCHONDRIA PROTEIN 41, MITOCHONDRIAL"/>
    <property type="match status" value="1"/>
</dbReference>
<dbReference type="Pfam" id="PF09424">
    <property type="entry name" value="YqeY"/>
    <property type="match status" value="1"/>
</dbReference>
<dbReference type="SUPFAM" id="SSF89095">
    <property type="entry name" value="GatB/YqeY motif"/>
    <property type="match status" value="1"/>
</dbReference>
<feature type="transit peptide" description="Mitochondrion" evidence="1">
    <location>
        <begin position="1"/>
        <end position="53"/>
    </location>
</feature>
<feature type="chain" id="PRO_0000237666" description="Altered inheritance of mitochondria protein 41, mitochondrial">
    <location>
        <begin position="54"/>
        <end position="185"/>
    </location>
</feature>